<organism>
    <name type="scientific">Rattus norvegicus</name>
    <name type="common">Rat</name>
    <dbReference type="NCBI Taxonomy" id="10116"/>
    <lineage>
        <taxon>Eukaryota</taxon>
        <taxon>Metazoa</taxon>
        <taxon>Chordata</taxon>
        <taxon>Craniata</taxon>
        <taxon>Vertebrata</taxon>
        <taxon>Euteleostomi</taxon>
        <taxon>Mammalia</taxon>
        <taxon>Eutheria</taxon>
        <taxon>Euarchontoglires</taxon>
        <taxon>Glires</taxon>
        <taxon>Rodentia</taxon>
        <taxon>Myomorpha</taxon>
        <taxon>Muroidea</taxon>
        <taxon>Muridae</taxon>
        <taxon>Murinae</taxon>
        <taxon>Rattus</taxon>
    </lineage>
</organism>
<keyword id="KW-1185">Reference proteome</keyword>
<keyword id="KW-0964">Secreted</keyword>
<keyword id="KW-0732">Signal</keyword>
<comment type="subcellular location">
    <subcellularLocation>
        <location evidence="3">Secreted</location>
    </subcellularLocation>
</comment>
<proteinExistence type="inferred from homology"/>
<dbReference type="EMBL" id="BF544937">
    <property type="status" value="NOT_ANNOTATED_CDS"/>
    <property type="molecule type" value="mRNA"/>
</dbReference>
<dbReference type="SMR" id="P0CD95"/>
<dbReference type="FunCoup" id="P0CD95">
    <property type="interactions" value="2"/>
</dbReference>
<dbReference type="PhosphoSitePlus" id="P0CD95"/>
<dbReference type="AGR" id="RGD:1592433"/>
<dbReference type="RGD" id="1592433">
    <property type="gene designation" value="C10h17orf67"/>
</dbReference>
<dbReference type="InParanoid" id="P0CD95"/>
<dbReference type="OMA" id="ETNMEYW"/>
<dbReference type="PhylomeDB" id="P0CD95"/>
<dbReference type="PRO" id="PR:P0CD95"/>
<dbReference type="Proteomes" id="UP000002494">
    <property type="component" value="Unplaced"/>
</dbReference>
<dbReference type="GO" id="GO:0005576">
    <property type="term" value="C:extracellular region"/>
    <property type="evidence" value="ECO:0007669"/>
    <property type="project" value="UniProtKB-SubCell"/>
</dbReference>
<dbReference type="InterPro" id="IPR027870">
    <property type="entry name" value="DUF4543"/>
</dbReference>
<dbReference type="PANTHER" id="PTHR48415">
    <property type="entry name" value="GENE 525-RELATED"/>
    <property type="match status" value="1"/>
</dbReference>
<dbReference type="PANTHER" id="PTHR48415:SF1">
    <property type="entry name" value="GENE 525-RELATED"/>
    <property type="match status" value="1"/>
</dbReference>
<dbReference type="Pfam" id="PF15076">
    <property type="entry name" value="DUF4543"/>
    <property type="match status" value="1"/>
</dbReference>
<sequence>MEKLFVLVFALTLLAFSSEASPILTEKQAKQLLRSRRQDRPSKPGFPDEPMREYMHHLLALEHRAEEQFLEHWLNPHCKPHCDRNIVQPV</sequence>
<reference key="1">
    <citation type="submission" date="2000-12" db="EMBL/GenBank/DDBJ databases">
        <authorList>
            <person name="Soares M.B."/>
        </authorList>
    </citation>
    <scope>NUCLEOTIDE SEQUENCE [LARGE SCALE MRNA]</scope>
    <source>
        <strain>Sprague-Dawley</strain>
    </source>
</reference>
<name>CQ067_RAT</name>
<evidence type="ECO:0000255" key="1"/>
<evidence type="ECO:0000256" key="2">
    <source>
        <dbReference type="SAM" id="MobiDB-lite"/>
    </source>
</evidence>
<evidence type="ECO:0000305" key="3"/>
<accession>P0CD95</accession>
<protein>
    <recommendedName>
        <fullName>Uncharacterized protein C17orf67 homolog</fullName>
    </recommendedName>
</protein>
<feature type="signal peptide" evidence="1">
    <location>
        <begin position="1"/>
        <end position="20"/>
    </location>
</feature>
<feature type="chain" id="PRO_0000391706" description="Uncharacterized protein C17orf67 homolog">
    <location>
        <begin position="21"/>
        <end position="90"/>
    </location>
</feature>
<feature type="region of interest" description="Disordered" evidence="2">
    <location>
        <begin position="31"/>
        <end position="50"/>
    </location>
</feature>